<feature type="chain" id="PRO_0000339204" description="Suppressor of tumorigenicity 7 protein">
    <location>
        <begin position="1"/>
        <end position="585"/>
    </location>
</feature>
<feature type="transmembrane region" description="Helical" evidence="2">
    <location>
        <begin position="15"/>
        <end position="35"/>
    </location>
</feature>
<feature type="transmembrane region" description="Helical" evidence="2">
    <location>
        <begin position="62"/>
        <end position="82"/>
    </location>
</feature>
<feature type="transmembrane region" description="Helical" evidence="2">
    <location>
        <begin position="512"/>
        <end position="532"/>
    </location>
</feature>
<feature type="modified residue" description="Phosphoserine" evidence="1">
    <location>
        <position position="386"/>
    </location>
</feature>
<feature type="glycosylation site" description="N-linked (GlcNAc...) asparagine" evidence="2">
    <location>
        <position position="47"/>
    </location>
</feature>
<name>ST7_LOXAF</name>
<comment type="subcellular location">
    <subcellularLocation>
        <location evidence="3">Membrane</location>
        <topology evidence="3">Multi-pass membrane protein</topology>
    </subcellularLocation>
</comment>
<comment type="similarity">
    <text evidence="3">Belongs to the ST7 family.</text>
</comment>
<protein>
    <recommendedName>
        <fullName>Suppressor of tumorigenicity 7 protein</fullName>
    </recommendedName>
</protein>
<keyword id="KW-0325">Glycoprotein</keyword>
<keyword id="KW-0472">Membrane</keyword>
<keyword id="KW-0597">Phosphoprotein</keyword>
<keyword id="KW-1185">Reference proteome</keyword>
<keyword id="KW-0812">Transmembrane</keyword>
<keyword id="KW-1133">Transmembrane helix</keyword>
<organism>
    <name type="scientific">Loxodonta africana</name>
    <name type="common">African elephant</name>
    <dbReference type="NCBI Taxonomy" id="9785"/>
    <lineage>
        <taxon>Eukaryota</taxon>
        <taxon>Metazoa</taxon>
        <taxon>Chordata</taxon>
        <taxon>Craniata</taxon>
        <taxon>Vertebrata</taxon>
        <taxon>Euteleostomi</taxon>
        <taxon>Mammalia</taxon>
        <taxon>Eutheria</taxon>
        <taxon>Afrotheria</taxon>
        <taxon>Proboscidea</taxon>
        <taxon>Elephantidae</taxon>
        <taxon>Loxodonta</taxon>
    </lineage>
</organism>
<reference key="1">
    <citation type="submission" date="2006-07" db="EMBL/GenBank/DDBJ databases">
        <title>NISC comparative sequencing initiative.</title>
        <authorList>
            <person name="Antonellis A."/>
            <person name="Ayele K."/>
            <person name="Benjamin B."/>
            <person name="Blakesley R.W."/>
            <person name="Boakye A."/>
            <person name="Bouffard G.G."/>
            <person name="Brinkley C."/>
            <person name="Brooks S."/>
            <person name="Chu G."/>
            <person name="Coleman H."/>
            <person name="Engle J."/>
            <person name="Gestole M."/>
            <person name="Greene A."/>
            <person name="Guan X."/>
            <person name="Gupta J."/>
            <person name="Haghighi P."/>
            <person name="Han J."/>
            <person name="Hansen N."/>
            <person name="Ho S.-L."/>
            <person name="Hu P."/>
            <person name="Hunter G."/>
            <person name="Hurle B."/>
            <person name="Idol J.R."/>
            <person name="Kwong P."/>
            <person name="Laric P."/>
            <person name="Larson S."/>
            <person name="Lee-Lin S.-Q."/>
            <person name="Legaspi R."/>
            <person name="Madden M."/>
            <person name="Maduro Q.L."/>
            <person name="Maduro V.B."/>
            <person name="Margulies E.H."/>
            <person name="Masiello C."/>
            <person name="Maskeri B."/>
            <person name="McDowell J."/>
            <person name="Mojidi H.A."/>
            <person name="Mullikin J.C."/>
            <person name="Oestreicher J.S."/>
            <person name="Park M."/>
            <person name="Portnoy M.E."/>
            <person name="Prasad A."/>
            <person name="Puri O."/>
            <person name="Reddix-Dugue N."/>
            <person name="Schandler K."/>
            <person name="Schueler M.G."/>
            <person name="Sison C."/>
            <person name="Stantripop S."/>
            <person name="Stephen E."/>
            <person name="Taye A."/>
            <person name="Thomas J.W."/>
            <person name="Thomas P.J."/>
            <person name="Tsipouri V."/>
            <person name="Ung L."/>
            <person name="Vogt J.L."/>
            <person name="Wetherby K.D."/>
            <person name="Young A."/>
            <person name="Green E.D."/>
        </authorList>
    </citation>
    <scope>NUCLEOTIDE SEQUENCE [LARGE SCALE GENOMIC DNA]</scope>
</reference>
<proteinExistence type="inferred from homology"/>
<sequence>MAEAGTGFLEQLKSCIVWSWTYLWTVWFFIVLFLVYILRVPLKINDNLSTVSMFLNTLTPKFYVALTGTSSLISGLILIFEWWYFRKYGTSFIEQVSVSHLRPLLGGVDNNSSNNSNSSNGDSDSNRQSVSECKVWRNPLNLFRGAEYNRYTWVTGREPLTYYDMNLSAQDHQTFFTCDSDHMRPADAIMQKAWRERNPQARISAAHEALEINEIRSRVEVPLIASSTIWEIKLLPKCATAYILLAEEEATTIAEAEKLFKQALKAGDGCYRRSQQLQHHGSQYEAQHRRDTNVLVYIKRRLAMCARRLGRTREAVKMMRDLMKEFPLLSMFNIHENLLEALLELQAYADVQAVLAKYDDISLPKSATICYTAALLKARAVSDKFSPEAASRRGLSTAEMNAVEAIHRAVEFNPHVPKYLLEMKSLILPPEHILKRGDSEAIAYAFFHLAHWKRVEGALNLLHCTWEGTFRMIPYPLEKGHLFYPYPICTETADRELLPSFHEVSVYPKKELPFFILFTAGLCSFTAMLALLTHQFPELMGVFAKAMIDIFCSAEFRDWNCKSIFMRVEDELDIPPAPQSQHFQN</sequence>
<dbReference type="EMBL" id="DP000087">
    <property type="protein sequence ID" value="ABG66649.1"/>
    <property type="molecule type" value="Genomic_DNA"/>
</dbReference>
<dbReference type="SMR" id="Q108U3"/>
<dbReference type="FunCoup" id="Q108U3">
    <property type="interactions" value="157"/>
</dbReference>
<dbReference type="GlyCosmos" id="Q108U3">
    <property type="glycosylation" value="1 site, No reported glycans"/>
</dbReference>
<dbReference type="eggNOG" id="KOG3807">
    <property type="taxonomic scope" value="Eukaryota"/>
</dbReference>
<dbReference type="InParanoid" id="Q108U3"/>
<dbReference type="Proteomes" id="UP000007646">
    <property type="component" value="Unassembled WGS sequence"/>
</dbReference>
<dbReference type="GO" id="GO:0016020">
    <property type="term" value="C:membrane"/>
    <property type="evidence" value="ECO:0007669"/>
    <property type="project" value="UniProtKB-SubCell"/>
</dbReference>
<dbReference type="CDD" id="cd11557">
    <property type="entry name" value="ST7"/>
    <property type="match status" value="1"/>
</dbReference>
<dbReference type="InterPro" id="IPR007311">
    <property type="entry name" value="ST7"/>
</dbReference>
<dbReference type="PANTHER" id="PTHR12745">
    <property type="entry name" value="SUPPRESSION OF TUMORIGENICITY 7"/>
    <property type="match status" value="1"/>
</dbReference>
<dbReference type="PANTHER" id="PTHR12745:SF10">
    <property type="entry name" value="SUPPRESSOR OF TUMORIGENICITY 7 PROTEIN"/>
    <property type="match status" value="1"/>
</dbReference>
<dbReference type="Pfam" id="PF04184">
    <property type="entry name" value="ST7"/>
    <property type="match status" value="1"/>
</dbReference>
<evidence type="ECO:0000250" key="1">
    <source>
        <dbReference type="UniProtKB" id="Q9NRC1"/>
    </source>
</evidence>
<evidence type="ECO:0000255" key="2"/>
<evidence type="ECO:0000305" key="3"/>
<gene>
    <name type="primary">ST7</name>
</gene>
<accession>Q108U3</accession>